<comment type="function">
    <text evidence="1">The glycine cleavage system catalyzes the degradation of glycine. The P protein binds the alpha-amino group of glycine through its pyridoxal phosphate cofactor; CO(2) is released and the remaining methylamine moiety is then transferred to the lipoamide cofactor of the H protein.</text>
</comment>
<comment type="catalytic activity">
    <reaction evidence="1">
        <text>N(6)-[(R)-lipoyl]-L-lysyl-[glycine-cleavage complex H protein] + glycine + H(+) = N(6)-[(R)-S(8)-aminomethyldihydrolipoyl]-L-lysyl-[glycine-cleavage complex H protein] + CO2</text>
        <dbReference type="Rhea" id="RHEA:24304"/>
        <dbReference type="Rhea" id="RHEA-COMP:10494"/>
        <dbReference type="Rhea" id="RHEA-COMP:10495"/>
        <dbReference type="ChEBI" id="CHEBI:15378"/>
        <dbReference type="ChEBI" id="CHEBI:16526"/>
        <dbReference type="ChEBI" id="CHEBI:57305"/>
        <dbReference type="ChEBI" id="CHEBI:83099"/>
        <dbReference type="ChEBI" id="CHEBI:83143"/>
        <dbReference type="EC" id="1.4.4.2"/>
    </reaction>
</comment>
<comment type="cofactor">
    <cofactor evidence="1">
        <name>pyridoxal 5'-phosphate</name>
        <dbReference type="ChEBI" id="CHEBI:597326"/>
    </cofactor>
</comment>
<comment type="subunit">
    <text evidence="1">The glycine cleavage system is composed of four proteins: P, T, L and H. In this organism, the P 'protein' is a heterodimer of two subunits.</text>
</comment>
<comment type="similarity">
    <text evidence="1">Belongs to the GcvP family. C-terminal subunit subfamily.</text>
</comment>
<organism>
    <name type="scientific">Staphylococcus epidermidis (strain ATCC 35984 / DSM 28319 / BCRC 17069 / CCUG 31568 / BM 3577 / RP62A)</name>
    <dbReference type="NCBI Taxonomy" id="176279"/>
    <lineage>
        <taxon>Bacteria</taxon>
        <taxon>Bacillati</taxon>
        <taxon>Bacillota</taxon>
        <taxon>Bacilli</taxon>
        <taxon>Bacillales</taxon>
        <taxon>Staphylococcaceae</taxon>
        <taxon>Staphylococcus</taxon>
    </lineage>
</organism>
<gene>
    <name evidence="1" type="primary">gcvPB</name>
    <name type="ordered locus">SERP1100</name>
</gene>
<dbReference type="EC" id="1.4.4.2" evidence="1"/>
<dbReference type="EMBL" id="CP000029">
    <property type="protein sequence ID" value="AAW54491.1"/>
    <property type="molecule type" value="Genomic_DNA"/>
</dbReference>
<dbReference type="RefSeq" id="WP_001831087.1">
    <property type="nucleotide sequence ID" value="NC_002976.3"/>
</dbReference>
<dbReference type="SMR" id="Q5HP14"/>
<dbReference type="STRING" id="176279.SERP1100"/>
<dbReference type="GeneID" id="50018662"/>
<dbReference type="KEGG" id="ser:SERP1100"/>
<dbReference type="eggNOG" id="COG1003">
    <property type="taxonomic scope" value="Bacteria"/>
</dbReference>
<dbReference type="HOGENOM" id="CLU_004620_5_0_9"/>
<dbReference type="Proteomes" id="UP000000531">
    <property type="component" value="Chromosome"/>
</dbReference>
<dbReference type="GO" id="GO:0005829">
    <property type="term" value="C:cytosol"/>
    <property type="evidence" value="ECO:0007669"/>
    <property type="project" value="TreeGrafter"/>
</dbReference>
<dbReference type="GO" id="GO:0005960">
    <property type="term" value="C:glycine cleavage complex"/>
    <property type="evidence" value="ECO:0007669"/>
    <property type="project" value="TreeGrafter"/>
</dbReference>
<dbReference type="GO" id="GO:0016594">
    <property type="term" value="F:glycine binding"/>
    <property type="evidence" value="ECO:0007669"/>
    <property type="project" value="TreeGrafter"/>
</dbReference>
<dbReference type="GO" id="GO:0004375">
    <property type="term" value="F:glycine dehydrogenase (decarboxylating) activity"/>
    <property type="evidence" value="ECO:0007669"/>
    <property type="project" value="UniProtKB-EC"/>
</dbReference>
<dbReference type="GO" id="GO:0030170">
    <property type="term" value="F:pyridoxal phosphate binding"/>
    <property type="evidence" value="ECO:0007669"/>
    <property type="project" value="TreeGrafter"/>
</dbReference>
<dbReference type="GO" id="GO:0019464">
    <property type="term" value="P:glycine decarboxylation via glycine cleavage system"/>
    <property type="evidence" value="ECO:0007669"/>
    <property type="project" value="UniProtKB-UniRule"/>
</dbReference>
<dbReference type="CDD" id="cd00613">
    <property type="entry name" value="GDC-P"/>
    <property type="match status" value="1"/>
</dbReference>
<dbReference type="FunFam" id="3.40.640.10:FF:000034">
    <property type="entry name" value="Probable glycine dehydrogenase (decarboxylating) subunit 2"/>
    <property type="match status" value="1"/>
</dbReference>
<dbReference type="FunFam" id="3.90.1150.10:FF:000014">
    <property type="entry name" value="Probable glycine dehydrogenase (decarboxylating) subunit 2"/>
    <property type="match status" value="1"/>
</dbReference>
<dbReference type="Gene3D" id="6.20.440.10">
    <property type="match status" value="1"/>
</dbReference>
<dbReference type="Gene3D" id="3.90.1150.10">
    <property type="entry name" value="Aspartate Aminotransferase, domain 1"/>
    <property type="match status" value="1"/>
</dbReference>
<dbReference type="Gene3D" id="3.40.640.10">
    <property type="entry name" value="Type I PLP-dependent aspartate aminotransferase-like (Major domain)"/>
    <property type="match status" value="1"/>
</dbReference>
<dbReference type="HAMAP" id="MF_00713">
    <property type="entry name" value="GcvPB"/>
    <property type="match status" value="1"/>
</dbReference>
<dbReference type="InterPro" id="IPR000192">
    <property type="entry name" value="Aminotrans_V_dom"/>
</dbReference>
<dbReference type="InterPro" id="IPR023012">
    <property type="entry name" value="GcvPB"/>
</dbReference>
<dbReference type="InterPro" id="IPR049316">
    <property type="entry name" value="GDC-P_C"/>
</dbReference>
<dbReference type="InterPro" id="IPR020581">
    <property type="entry name" value="GDC_P"/>
</dbReference>
<dbReference type="InterPro" id="IPR015424">
    <property type="entry name" value="PyrdxlP-dep_Trfase"/>
</dbReference>
<dbReference type="InterPro" id="IPR015421">
    <property type="entry name" value="PyrdxlP-dep_Trfase_major"/>
</dbReference>
<dbReference type="InterPro" id="IPR015422">
    <property type="entry name" value="PyrdxlP-dep_Trfase_small"/>
</dbReference>
<dbReference type="NCBIfam" id="NF003346">
    <property type="entry name" value="PRK04366.1"/>
    <property type="match status" value="1"/>
</dbReference>
<dbReference type="PANTHER" id="PTHR11773:SF1">
    <property type="entry name" value="GLYCINE DEHYDROGENASE (DECARBOXYLATING), MITOCHONDRIAL"/>
    <property type="match status" value="1"/>
</dbReference>
<dbReference type="PANTHER" id="PTHR11773">
    <property type="entry name" value="GLYCINE DEHYDROGENASE, DECARBOXYLATING"/>
    <property type="match status" value="1"/>
</dbReference>
<dbReference type="Pfam" id="PF00266">
    <property type="entry name" value="Aminotran_5"/>
    <property type="match status" value="1"/>
</dbReference>
<dbReference type="Pfam" id="PF21478">
    <property type="entry name" value="GcvP2_C"/>
    <property type="match status" value="1"/>
</dbReference>
<dbReference type="SUPFAM" id="SSF53383">
    <property type="entry name" value="PLP-dependent transferases"/>
    <property type="match status" value="1"/>
</dbReference>
<sequence length="502" mass="56404">MISKSSPLIFERSKKDRYAYSLPQNDIENISIASLLDDKYIRKHKAEFPEVSELDLVRHYTELSNKNFGVDTGFYPLGSCTMKYNPKINEKVARISGFSESHPLQEEEHVQGSLEIIYSLQEELKEITGMDEVTLQPAAGAHGEWTALMIFKAYHEKNGQSHRDEVIVPDSAHGTNPASASFAGFKSVTVKSNQRGEVDIEDLKRVVNDNTAAIMLTNPNTLGIFEQDIIEIGKIVHEAGGLLYYDGANLNAILDKVRPGDMGFDAVHLNLHKTFTGPHGGGGPGSGPVGVVEKLASYLPKPMVIKDNDRYKYDNDIPNSIGRVKPFYGNFGIYLRAYTYIRSMGANGLKEVSEAAVLNANYIKSRLKNHFEIPFNQYCKHEFVLSGTLQKQYGVRTLDMAKRLLDFGVHPPTIYFPLNVEEGMMIEPTETESKETLDYFIDAMIQIADETKNDPDKVLEAPHTTIIDRLDETTAARKPILKFEELKDEKYKEHTNIDSEDN</sequence>
<evidence type="ECO:0000255" key="1">
    <source>
        <dbReference type="HAMAP-Rule" id="MF_00713"/>
    </source>
</evidence>
<keyword id="KW-0560">Oxidoreductase</keyword>
<keyword id="KW-0663">Pyridoxal phosphate</keyword>
<keyword id="KW-1185">Reference proteome</keyword>
<feature type="chain" id="PRO_0000167018" description="Probable glycine dehydrogenase (decarboxylating) subunit 2">
    <location>
        <begin position="1"/>
        <end position="502"/>
    </location>
</feature>
<feature type="modified residue" description="N6-(pyridoxal phosphate)lysine" evidence="1">
    <location>
        <position position="273"/>
    </location>
</feature>
<protein>
    <recommendedName>
        <fullName evidence="1">Probable glycine dehydrogenase (decarboxylating) subunit 2</fullName>
        <ecNumber evidence="1">1.4.4.2</ecNumber>
    </recommendedName>
    <alternativeName>
        <fullName evidence="1">Glycine cleavage system P-protein subunit 2</fullName>
    </alternativeName>
    <alternativeName>
        <fullName evidence="1">Glycine decarboxylase subunit 2</fullName>
    </alternativeName>
    <alternativeName>
        <fullName evidence="1">Glycine dehydrogenase (aminomethyl-transferring) subunit 2</fullName>
    </alternativeName>
</protein>
<reference key="1">
    <citation type="journal article" date="2005" name="J. Bacteriol.">
        <title>Insights on evolution of virulence and resistance from the complete genome analysis of an early methicillin-resistant Staphylococcus aureus strain and a biofilm-producing methicillin-resistant Staphylococcus epidermidis strain.</title>
        <authorList>
            <person name="Gill S.R."/>
            <person name="Fouts D.E."/>
            <person name="Archer G.L."/>
            <person name="Mongodin E.F."/>
            <person name="DeBoy R.T."/>
            <person name="Ravel J."/>
            <person name="Paulsen I.T."/>
            <person name="Kolonay J.F."/>
            <person name="Brinkac L.M."/>
            <person name="Beanan M.J."/>
            <person name="Dodson R.J."/>
            <person name="Daugherty S.C."/>
            <person name="Madupu R."/>
            <person name="Angiuoli S.V."/>
            <person name="Durkin A.S."/>
            <person name="Haft D.H."/>
            <person name="Vamathevan J.J."/>
            <person name="Khouri H."/>
            <person name="Utterback T.R."/>
            <person name="Lee C."/>
            <person name="Dimitrov G."/>
            <person name="Jiang L."/>
            <person name="Qin H."/>
            <person name="Weidman J."/>
            <person name="Tran K."/>
            <person name="Kang K.H."/>
            <person name="Hance I.R."/>
            <person name="Nelson K.E."/>
            <person name="Fraser C.M."/>
        </authorList>
    </citation>
    <scope>NUCLEOTIDE SEQUENCE [LARGE SCALE GENOMIC DNA]</scope>
    <source>
        <strain>ATCC 35984 / DSM 28319 / BCRC 17069 / CCUG 31568 / BM 3577 / RP62A</strain>
    </source>
</reference>
<name>GCSPB_STAEQ</name>
<proteinExistence type="inferred from homology"/>
<accession>Q5HP14</accession>